<accession>Q5YKK4</accession>
<gene>
    <name type="primary">MT-CYB</name>
    <name type="synonym">COB</name>
    <name type="synonym">CYTB</name>
    <name type="synonym">MTCYB</name>
</gene>
<name>CYB_DOLPA</name>
<dbReference type="EMBL" id="AY382787">
    <property type="protein sequence ID" value="AAS47495.1"/>
    <property type="molecule type" value="Genomic_DNA"/>
</dbReference>
<dbReference type="SMR" id="Q5YKK4"/>
<dbReference type="GO" id="GO:0005743">
    <property type="term" value="C:mitochondrial inner membrane"/>
    <property type="evidence" value="ECO:0007669"/>
    <property type="project" value="UniProtKB-SubCell"/>
</dbReference>
<dbReference type="GO" id="GO:0045275">
    <property type="term" value="C:respiratory chain complex III"/>
    <property type="evidence" value="ECO:0007669"/>
    <property type="project" value="InterPro"/>
</dbReference>
<dbReference type="GO" id="GO:0046872">
    <property type="term" value="F:metal ion binding"/>
    <property type="evidence" value="ECO:0007669"/>
    <property type="project" value="UniProtKB-KW"/>
</dbReference>
<dbReference type="GO" id="GO:0008121">
    <property type="term" value="F:ubiquinol-cytochrome-c reductase activity"/>
    <property type="evidence" value="ECO:0007669"/>
    <property type="project" value="InterPro"/>
</dbReference>
<dbReference type="GO" id="GO:0006122">
    <property type="term" value="P:mitochondrial electron transport, ubiquinol to cytochrome c"/>
    <property type="evidence" value="ECO:0007669"/>
    <property type="project" value="TreeGrafter"/>
</dbReference>
<dbReference type="CDD" id="cd00290">
    <property type="entry name" value="cytochrome_b_C"/>
    <property type="match status" value="1"/>
</dbReference>
<dbReference type="CDD" id="cd00284">
    <property type="entry name" value="Cytochrome_b_N"/>
    <property type="match status" value="1"/>
</dbReference>
<dbReference type="FunFam" id="1.20.810.10:FF:000002">
    <property type="entry name" value="Cytochrome b"/>
    <property type="match status" value="1"/>
</dbReference>
<dbReference type="Gene3D" id="1.20.810.10">
    <property type="entry name" value="Cytochrome Bc1 Complex, Chain C"/>
    <property type="match status" value="1"/>
</dbReference>
<dbReference type="InterPro" id="IPR005798">
    <property type="entry name" value="Cyt_b/b6_C"/>
</dbReference>
<dbReference type="InterPro" id="IPR036150">
    <property type="entry name" value="Cyt_b/b6_C_sf"/>
</dbReference>
<dbReference type="InterPro" id="IPR005797">
    <property type="entry name" value="Cyt_b/b6_N"/>
</dbReference>
<dbReference type="InterPro" id="IPR027387">
    <property type="entry name" value="Cytb/b6-like_sf"/>
</dbReference>
<dbReference type="InterPro" id="IPR030689">
    <property type="entry name" value="Cytochrome_b"/>
</dbReference>
<dbReference type="InterPro" id="IPR048260">
    <property type="entry name" value="Cytochrome_b_C_euk/bac"/>
</dbReference>
<dbReference type="InterPro" id="IPR048259">
    <property type="entry name" value="Cytochrome_b_N_euk/bac"/>
</dbReference>
<dbReference type="InterPro" id="IPR016174">
    <property type="entry name" value="Di-haem_cyt_TM"/>
</dbReference>
<dbReference type="PANTHER" id="PTHR19271">
    <property type="entry name" value="CYTOCHROME B"/>
    <property type="match status" value="1"/>
</dbReference>
<dbReference type="PANTHER" id="PTHR19271:SF16">
    <property type="entry name" value="CYTOCHROME B"/>
    <property type="match status" value="1"/>
</dbReference>
<dbReference type="Pfam" id="PF00032">
    <property type="entry name" value="Cytochrom_B_C"/>
    <property type="match status" value="1"/>
</dbReference>
<dbReference type="Pfam" id="PF00033">
    <property type="entry name" value="Cytochrome_B"/>
    <property type="match status" value="1"/>
</dbReference>
<dbReference type="PIRSF" id="PIRSF038885">
    <property type="entry name" value="COB"/>
    <property type="match status" value="1"/>
</dbReference>
<dbReference type="SUPFAM" id="SSF81648">
    <property type="entry name" value="a domain/subunit of cytochrome bc1 complex (Ubiquinol-cytochrome c reductase)"/>
    <property type="match status" value="1"/>
</dbReference>
<dbReference type="SUPFAM" id="SSF81342">
    <property type="entry name" value="Transmembrane di-heme cytochromes"/>
    <property type="match status" value="1"/>
</dbReference>
<dbReference type="PROSITE" id="PS51003">
    <property type="entry name" value="CYTB_CTER"/>
    <property type="match status" value="1"/>
</dbReference>
<dbReference type="PROSITE" id="PS51002">
    <property type="entry name" value="CYTB_NTER"/>
    <property type="match status" value="1"/>
</dbReference>
<proteinExistence type="inferred from homology"/>
<geneLocation type="mitochondrion"/>
<comment type="function">
    <text evidence="2">Component of the ubiquinol-cytochrome c reductase complex (complex III or cytochrome b-c1 complex) that is part of the mitochondrial respiratory chain. The b-c1 complex mediates electron transfer from ubiquinol to cytochrome c. Contributes to the generation of a proton gradient across the mitochondrial membrane that is then used for ATP synthesis.</text>
</comment>
<comment type="cofactor">
    <cofactor evidence="2">
        <name>heme b</name>
        <dbReference type="ChEBI" id="CHEBI:60344"/>
    </cofactor>
    <text evidence="2">Binds 2 heme b groups non-covalently.</text>
</comment>
<comment type="subunit">
    <text evidence="2">The cytochrome bc1 complex contains 11 subunits: 3 respiratory subunits (MT-CYB, CYC1 and UQCRFS1), 2 core proteins (UQCRC1 and UQCRC2) and 6 low-molecular weight proteins (UQCRH/QCR6, UQCRB/QCR7, UQCRQ/QCR8, UQCR10/QCR9, UQCR11/QCR10 and a cleavage product of UQCRFS1). This cytochrome bc1 complex then forms a dimer.</text>
</comment>
<comment type="subcellular location">
    <subcellularLocation>
        <location evidence="2">Mitochondrion inner membrane</location>
        <topology evidence="2">Multi-pass membrane protein</topology>
    </subcellularLocation>
</comment>
<comment type="miscellaneous">
    <text evidence="1">Heme 1 (or BL or b562) is low-potential and absorbs at about 562 nm, and heme 2 (or BH or b566) is high-potential and absorbs at about 566 nm.</text>
</comment>
<comment type="similarity">
    <text evidence="3 4">Belongs to the cytochrome b family.</text>
</comment>
<comment type="caution">
    <text evidence="2">The full-length protein contains only eight transmembrane helices, not nine as predicted by bioinformatics tools.</text>
</comment>
<feature type="chain" id="PRO_0000257895" description="Cytochrome b">
    <location>
        <begin position="1"/>
        <end position="379"/>
    </location>
</feature>
<feature type="transmembrane region" description="Helical" evidence="2">
    <location>
        <begin position="33"/>
        <end position="53"/>
    </location>
</feature>
<feature type="transmembrane region" description="Helical" evidence="2">
    <location>
        <begin position="77"/>
        <end position="98"/>
    </location>
</feature>
<feature type="transmembrane region" description="Helical" evidence="2">
    <location>
        <begin position="113"/>
        <end position="133"/>
    </location>
</feature>
<feature type="transmembrane region" description="Helical" evidence="2">
    <location>
        <begin position="178"/>
        <end position="198"/>
    </location>
</feature>
<feature type="transmembrane region" description="Helical" evidence="2">
    <location>
        <begin position="226"/>
        <end position="246"/>
    </location>
</feature>
<feature type="transmembrane region" description="Helical" evidence="2">
    <location>
        <begin position="288"/>
        <end position="308"/>
    </location>
</feature>
<feature type="transmembrane region" description="Helical" evidence="2">
    <location>
        <begin position="320"/>
        <end position="340"/>
    </location>
</feature>
<feature type="transmembrane region" description="Helical" evidence="2">
    <location>
        <begin position="347"/>
        <end position="367"/>
    </location>
</feature>
<feature type="binding site" description="axial binding residue" evidence="2">
    <location>
        <position position="83"/>
    </location>
    <ligand>
        <name>heme b</name>
        <dbReference type="ChEBI" id="CHEBI:60344"/>
        <label>b562</label>
    </ligand>
    <ligandPart>
        <name>Fe</name>
        <dbReference type="ChEBI" id="CHEBI:18248"/>
    </ligandPart>
</feature>
<feature type="binding site" description="axial binding residue" evidence="2">
    <location>
        <position position="97"/>
    </location>
    <ligand>
        <name>heme b</name>
        <dbReference type="ChEBI" id="CHEBI:60344"/>
        <label>b566</label>
    </ligand>
    <ligandPart>
        <name>Fe</name>
        <dbReference type="ChEBI" id="CHEBI:18248"/>
    </ligandPart>
</feature>
<feature type="binding site" description="axial binding residue" evidence="2">
    <location>
        <position position="182"/>
    </location>
    <ligand>
        <name>heme b</name>
        <dbReference type="ChEBI" id="CHEBI:60344"/>
        <label>b562</label>
    </ligand>
    <ligandPart>
        <name>Fe</name>
        <dbReference type="ChEBI" id="CHEBI:18248"/>
    </ligandPart>
</feature>
<feature type="binding site" description="axial binding residue" evidence="2">
    <location>
        <position position="196"/>
    </location>
    <ligand>
        <name>heme b</name>
        <dbReference type="ChEBI" id="CHEBI:60344"/>
        <label>b566</label>
    </ligand>
    <ligandPart>
        <name>Fe</name>
        <dbReference type="ChEBI" id="CHEBI:18248"/>
    </ligandPart>
</feature>
<feature type="binding site" evidence="2">
    <location>
        <position position="201"/>
    </location>
    <ligand>
        <name>a ubiquinone</name>
        <dbReference type="ChEBI" id="CHEBI:16389"/>
    </ligand>
</feature>
<protein>
    <recommendedName>
        <fullName>Cytochrome b</fullName>
    </recommendedName>
    <alternativeName>
        <fullName>Complex III subunit 3</fullName>
    </alternativeName>
    <alternativeName>
        <fullName>Complex III subunit III</fullName>
    </alternativeName>
    <alternativeName>
        <fullName>Cytochrome b-c1 complex subunit 3</fullName>
    </alternativeName>
    <alternativeName>
        <fullName>Ubiquinol-cytochrome-c reductase complex cytochrome b subunit</fullName>
    </alternativeName>
</protein>
<reference key="1">
    <citation type="submission" date="2003-09" db="EMBL/GenBank/DDBJ databases">
        <title>Molecular distinction between domestic Andean and laboratory guinea-pigs (Cavia porcellus) based on cytochrome b gene sequences.</title>
        <authorList>
            <person name="Spotorno A.E."/>
            <person name="Valladares J.P."/>
            <person name="Marin J.C."/>
        </authorList>
    </citation>
    <scope>NUCLEOTIDE SEQUENCE [GENOMIC DNA]</scope>
    <source>
        <tissue>Blood</tissue>
    </source>
</reference>
<evidence type="ECO:0000250" key="1"/>
<evidence type="ECO:0000250" key="2">
    <source>
        <dbReference type="UniProtKB" id="P00157"/>
    </source>
</evidence>
<evidence type="ECO:0000255" key="3">
    <source>
        <dbReference type="PROSITE-ProRule" id="PRU00967"/>
    </source>
</evidence>
<evidence type="ECO:0000255" key="4">
    <source>
        <dbReference type="PROSITE-ProRule" id="PRU00968"/>
    </source>
</evidence>
<sequence>MTHMRKSHPLIKIINHSFIDLPTPSNISAWWNFGSLLGICLGLQIITGLFLAMHYTADTITAFSSVTHICRDVNYGWLIRYLHANGASMFFILLYLHIGRGIYYGSYTFMETWNIGILLLFAVMATAFMGYVLPWGQMSSWGATVITNLLSAIPYIGTTLVEWIWGGFSVDKATLTRFFAFHFILPFIIPALVMIHFFFLHETGSNNPSGLNSDSDKIPFHPYYTIKDIMGLLIMMLALMSLVLFSPDLLGDPDNYTPANPLNTPPHIKPEWYFLFAYAILRSIPNKLGGVLALVLSILVLALFPMLHLSKQRSMTFRPFSQCLLWMLTANLFILTWIGGQPVEYPYITIGQLASINYFFTILIVSRLVSLMENKVLKW</sequence>
<keyword id="KW-0249">Electron transport</keyword>
<keyword id="KW-0349">Heme</keyword>
<keyword id="KW-0408">Iron</keyword>
<keyword id="KW-0472">Membrane</keyword>
<keyword id="KW-0479">Metal-binding</keyword>
<keyword id="KW-0496">Mitochondrion</keyword>
<keyword id="KW-0999">Mitochondrion inner membrane</keyword>
<keyword id="KW-0679">Respiratory chain</keyword>
<keyword id="KW-0812">Transmembrane</keyword>
<keyword id="KW-1133">Transmembrane helix</keyword>
<keyword id="KW-0813">Transport</keyword>
<keyword id="KW-0830">Ubiquinone</keyword>
<organism>
    <name type="scientific">Dolichotis patagonum</name>
    <name type="common">Patagonian mara</name>
    <dbReference type="NCBI Taxonomy" id="29091"/>
    <lineage>
        <taxon>Eukaryota</taxon>
        <taxon>Metazoa</taxon>
        <taxon>Chordata</taxon>
        <taxon>Craniata</taxon>
        <taxon>Vertebrata</taxon>
        <taxon>Euteleostomi</taxon>
        <taxon>Mammalia</taxon>
        <taxon>Eutheria</taxon>
        <taxon>Euarchontoglires</taxon>
        <taxon>Glires</taxon>
        <taxon>Rodentia</taxon>
        <taxon>Hystricomorpha</taxon>
        <taxon>Caviidae</taxon>
        <taxon>Dolichotis</taxon>
    </lineage>
</organism>